<feature type="chain" id="PRO_1000006836" description="Phenylalanine--tRNA ligase alpha subunit">
    <location>
        <begin position="1"/>
        <end position="344"/>
    </location>
</feature>
<feature type="binding site" evidence="1">
    <location>
        <position position="256"/>
    </location>
    <ligand>
        <name>Mg(2+)</name>
        <dbReference type="ChEBI" id="CHEBI:18420"/>
        <note>shared with beta subunit</note>
    </ligand>
</feature>
<name>SYFA_GEOTN</name>
<comment type="catalytic activity">
    <reaction evidence="1">
        <text>tRNA(Phe) + L-phenylalanine + ATP = L-phenylalanyl-tRNA(Phe) + AMP + diphosphate + H(+)</text>
        <dbReference type="Rhea" id="RHEA:19413"/>
        <dbReference type="Rhea" id="RHEA-COMP:9668"/>
        <dbReference type="Rhea" id="RHEA-COMP:9699"/>
        <dbReference type="ChEBI" id="CHEBI:15378"/>
        <dbReference type="ChEBI" id="CHEBI:30616"/>
        <dbReference type="ChEBI" id="CHEBI:33019"/>
        <dbReference type="ChEBI" id="CHEBI:58095"/>
        <dbReference type="ChEBI" id="CHEBI:78442"/>
        <dbReference type="ChEBI" id="CHEBI:78531"/>
        <dbReference type="ChEBI" id="CHEBI:456215"/>
        <dbReference type="EC" id="6.1.1.20"/>
    </reaction>
</comment>
<comment type="cofactor">
    <cofactor evidence="1">
        <name>Mg(2+)</name>
        <dbReference type="ChEBI" id="CHEBI:18420"/>
    </cofactor>
    <text evidence="1">Binds 2 magnesium ions per tetramer.</text>
</comment>
<comment type="subunit">
    <text evidence="1">Tetramer of two alpha and two beta subunits.</text>
</comment>
<comment type="subcellular location">
    <subcellularLocation>
        <location evidence="1">Cytoplasm</location>
    </subcellularLocation>
</comment>
<comment type="similarity">
    <text evidence="1">Belongs to the class-II aminoacyl-tRNA synthetase family. Phe-tRNA synthetase alpha subunit type 1 subfamily.</text>
</comment>
<protein>
    <recommendedName>
        <fullName evidence="1">Phenylalanine--tRNA ligase alpha subunit</fullName>
        <ecNumber evidence="1">6.1.1.20</ecNumber>
    </recommendedName>
    <alternativeName>
        <fullName evidence="1">Phenylalanyl-tRNA synthetase alpha subunit</fullName>
        <shortName evidence="1">PheRS</shortName>
    </alternativeName>
</protein>
<sequence length="344" mass="39020">MKERLHELEREALEKIEQAGDLKALNDVRVAYLGKKGPITEVLRGMGALPPEERPKIGALANEVREAIQKALEAKQTKLEEEEVERKLAAEAIDVTLPGRPVKLGNPHPLTRVIEEIEDLFIGMGYTVAEGPEVETDYYNFEALNLPKGHPARDMQDSFYITEEILLRTHTSPMQARTMEKHRGRGPVKIICPGKVYRRDTDDATHSHQFTQIEGLVVDRNIRMSDLKGTLREFARKLFGEGRDIRFRPSFFPFTEPSVEVDVSCFRCEGHGCSVCKGTGWIEILGAGMVHPNVLEMAGFDSKTYTGFAFGMGPERIAMLKYGIDDIRHFYQNDLRFLQQFLRV</sequence>
<organism>
    <name type="scientific">Geobacillus thermodenitrificans (strain NG80-2)</name>
    <dbReference type="NCBI Taxonomy" id="420246"/>
    <lineage>
        <taxon>Bacteria</taxon>
        <taxon>Bacillati</taxon>
        <taxon>Bacillota</taxon>
        <taxon>Bacilli</taxon>
        <taxon>Bacillales</taxon>
        <taxon>Anoxybacillaceae</taxon>
        <taxon>Geobacillus</taxon>
    </lineage>
</organism>
<dbReference type="EC" id="6.1.1.20" evidence="1"/>
<dbReference type="EMBL" id="CP000557">
    <property type="protein sequence ID" value="ABO67978.1"/>
    <property type="molecule type" value="Genomic_DNA"/>
</dbReference>
<dbReference type="RefSeq" id="WP_008881162.1">
    <property type="nucleotide sequence ID" value="NC_009328.1"/>
</dbReference>
<dbReference type="SMR" id="A4IRM4"/>
<dbReference type="KEGG" id="gtn:GTNG_2633"/>
<dbReference type="eggNOG" id="COG0016">
    <property type="taxonomic scope" value="Bacteria"/>
</dbReference>
<dbReference type="HOGENOM" id="CLU_025086_0_1_9"/>
<dbReference type="Proteomes" id="UP000001578">
    <property type="component" value="Chromosome"/>
</dbReference>
<dbReference type="GO" id="GO:0005737">
    <property type="term" value="C:cytoplasm"/>
    <property type="evidence" value="ECO:0007669"/>
    <property type="project" value="UniProtKB-SubCell"/>
</dbReference>
<dbReference type="GO" id="GO:0005524">
    <property type="term" value="F:ATP binding"/>
    <property type="evidence" value="ECO:0007669"/>
    <property type="project" value="UniProtKB-UniRule"/>
</dbReference>
<dbReference type="GO" id="GO:0140096">
    <property type="term" value="F:catalytic activity, acting on a protein"/>
    <property type="evidence" value="ECO:0007669"/>
    <property type="project" value="UniProtKB-ARBA"/>
</dbReference>
<dbReference type="GO" id="GO:0000287">
    <property type="term" value="F:magnesium ion binding"/>
    <property type="evidence" value="ECO:0007669"/>
    <property type="project" value="UniProtKB-UniRule"/>
</dbReference>
<dbReference type="GO" id="GO:0004826">
    <property type="term" value="F:phenylalanine-tRNA ligase activity"/>
    <property type="evidence" value="ECO:0007669"/>
    <property type="project" value="UniProtKB-UniRule"/>
</dbReference>
<dbReference type="GO" id="GO:0016740">
    <property type="term" value="F:transferase activity"/>
    <property type="evidence" value="ECO:0007669"/>
    <property type="project" value="UniProtKB-ARBA"/>
</dbReference>
<dbReference type="GO" id="GO:0000049">
    <property type="term" value="F:tRNA binding"/>
    <property type="evidence" value="ECO:0007669"/>
    <property type="project" value="InterPro"/>
</dbReference>
<dbReference type="GO" id="GO:0006432">
    <property type="term" value="P:phenylalanyl-tRNA aminoacylation"/>
    <property type="evidence" value="ECO:0007669"/>
    <property type="project" value="UniProtKB-UniRule"/>
</dbReference>
<dbReference type="CDD" id="cd00496">
    <property type="entry name" value="PheRS_alpha_core"/>
    <property type="match status" value="1"/>
</dbReference>
<dbReference type="FunFam" id="3.30.930.10:FF:000003">
    <property type="entry name" value="Phenylalanine--tRNA ligase alpha subunit"/>
    <property type="match status" value="1"/>
</dbReference>
<dbReference type="Gene3D" id="3.30.930.10">
    <property type="entry name" value="Bira Bifunctional Protein, Domain 2"/>
    <property type="match status" value="1"/>
</dbReference>
<dbReference type="HAMAP" id="MF_00281">
    <property type="entry name" value="Phe_tRNA_synth_alpha1"/>
    <property type="match status" value="1"/>
</dbReference>
<dbReference type="InterPro" id="IPR006195">
    <property type="entry name" value="aa-tRNA-synth_II"/>
</dbReference>
<dbReference type="InterPro" id="IPR045864">
    <property type="entry name" value="aa-tRNA-synth_II/BPL/LPL"/>
</dbReference>
<dbReference type="InterPro" id="IPR004529">
    <property type="entry name" value="Phe-tRNA-synth_IIc_asu"/>
</dbReference>
<dbReference type="InterPro" id="IPR004188">
    <property type="entry name" value="Phe-tRNA_ligase_II_N"/>
</dbReference>
<dbReference type="InterPro" id="IPR022911">
    <property type="entry name" value="Phe_tRNA_ligase_alpha1_bac"/>
</dbReference>
<dbReference type="InterPro" id="IPR002319">
    <property type="entry name" value="Phenylalanyl-tRNA_Synthase"/>
</dbReference>
<dbReference type="InterPro" id="IPR010978">
    <property type="entry name" value="tRNA-bd_arm"/>
</dbReference>
<dbReference type="NCBIfam" id="TIGR00468">
    <property type="entry name" value="pheS"/>
    <property type="match status" value="1"/>
</dbReference>
<dbReference type="PANTHER" id="PTHR11538:SF41">
    <property type="entry name" value="PHENYLALANINE--TRNA LIGASE, MITOCHONDRIAL"/>
    <property type="match status" value="1"/>
</dbReference>
<dbReference type="PANTHER" id="PTHR11538">
    <property type="entry name" value="PHENYLALANYL-TRNA SYNTHETASE"/>
    <property type="match status" value="1"/>
</dbReference>
<dbReference type="Pfam" id="PF02912">
    <property type="entry name" value="Phe_tRNA-synt_N"/>
    <property type="match status" value="1"/>
</dbReference>
<dbReference type="Pfam" id="PF01409">
    <property type="entry name" value="tRNA-synt_2d"/>
    <property type="match status" value="1"/>
</dbReference>
<dbReference type="SUPFAM" id="SSF55681">
    <property type="entry name" value="Class II aaRS and biotin synthetases"/>
    <property type="match status" value="1"/>
</dbReference>
<dbReference type="SUPFAM" id="SSF46589">
    <property type="entry name" value="tRNA-binding arm"/>
    <property type="match status" value="1"/>
</dbReference>
<dbReference type="PROSITE" id="PS50862">
    <property type="entry name" value="AA_TRNA_LIGASE_II"/>
    <property type="match status" value="1"/>
</dbReference>
<gene>
    <name evidence="1" type="primary">pheS</name>
    <name type="ordered locus">GTNG_2633</name>
</gene>
<keyword id="KW-0030">Aminoacyl-tRNA synthetase</keyword>
<keyword id="KW-0067">ATP-binding</keyword>
<keyword id="KW-0963">Cytoplasm</keyword>
<keyword id="KW-0436">Ligase</keyword>
<keyword id="KW-0460">Magnesium</keyword>
<keyword id="KW-0479">Metal-binding</keyword>
<keyword id="KW-0547">Nucleotide-binding</keyword>
<keyword id="KW-0648">Protein biosynthesis</keyword>
<accession>A4IRM4</accession>
<reference key="1">
    <citation type="journal article" date="2007" name="Proc. Natl. Acad. Sci. U.S.A.">
        <title>Genome and proteome of long-chain alkane degrading Geobacillus thermodenitrificans NG80-2 isolated from a deep-subsurface oil reservoir.</title>
        <authorList>
            <person name="Feng L."/>
            <person name="Wang W."/>
            <person name="Cheng J."/>
            <person name="Ren Y."/>
            <person name="Zhao G."/>
            <person name="Gao C."/>
            <person name="Tang Y."/>
            <person name="Liu X."/>
            <person name="Han W."/>
            <person name="Peng X."/>
            <person name="Liu R."/>
            <person name="Wang L."/>
        </authorList>
    </citation>
    <scope>NUCLEOTIDE SEQUENCE [LARGE SCALE GENOMIC DNA]</scope>
    <source>
        <strain>NG80-2</strain>
    </source>
</reference>
<evidence type="ECO:0000255" key="1">
    <source>
        <dbReference type="HAMAP-Rule" id="MF_00281"/>
    </source>
</evidence>
<proteinExistence type="inferred from homology"/>